<name>FAD3C_RICCO</name>
<keyword id="KW-0150">Chloroplast</keyword>
<keyword id="KW-0275">Fatty acid biosynthesis</keyword>
<keyword id="KW-0276">Fatty acid metabolism</keyword>
<keyword id="KW-0444">Lipid biosynthesis</keyword>
<keyword id="KW-0443">Lipid metabolism</keyword>
<keyword id="KW-0472">Membrane</keyword>
<keyword id="KW-0560">Oxidoreductase</keyword>
<keyword id="KW-0934">Plastid</keyword>
<keyword id="KW-0809">Transit peptide</keyword>
<sequence>MAAGWVLSECGLRPLPRIYSRPRIGFTSKTTNLLKLRELPDSKSYNLCSSFKVSSWSNSKQSNWALNVAVPVNVSTVSGEDDREREEFNGIVNVDEGKGEFFDAGAPPPFTLADIRAAIPKHCWVKNPWRSMSYVLRDVVVVFGLAAVAAYFNNWVAWPLYWFCQGTMFWALFVLGHDCGHGSFSNNPKLNSVVGHLLHSSILVPYHGWRISHRTHHQNHGHVENDESWHPLSEKIFKSLDNVTKTLRFSLPFPMLAYPFYLWSRSPGKKGSHFHPDSGLFVPKERKDIITSTACWTAMAALLVYLNFSMGPVQMLKLYGIPYWIFVMWLDFVTYLHHHGHEDKLPWYRGKAWSYLRGGLTTLDRDYGWINNIHHDIGTHVIHHLFPQIPHYHLVEATEAAKPVMGKYYREPKKSGPLPLHLLGSLVRSMKEDHYVSDTGDVVYYQKDPKLSGIGGEKTE</sequence>
<accession>P48619</accession>
<proteinExistence type="evidence at transcript level"/>
<comment type="function">
    <text>Chloroplast omega-3 fatty acid desaturase introduces the third double bond in the biosynthesis of 16:3 and 18:3 fatty acids, important constituents of plant membranes. It is thought to use ferredoxin as an electron donor and to act on fatty acids esterified to galactolipids, sulfolipids and phosphatidylglycerol.</text>
</comment>
<comment type="pathway">
    <text>Lipid metabolism; polyunsaturated fatty acid biosynthesis.</text>
</comment>
<comment type="subcellular location">
    <subcellularLocation>
        <location evidence="2">Plastid</location>
        <location evidence="2">Chloroplast membrane</location>
        <topology evidence="2">Peripheral membrane protein</topology>
    </subcellularLocation>
</comment>
<comment type="domain">
    <text>The histidine box domains may contain the active site and/or be involved in metal ion binding.</text>
</comment>
<comment type="similarity">
    <text evidence="2">Belongs to the fatty acid desaturase type 1 family.</text>
</comment>
<evidence type="ECO:0000255" key="1"/>
<evidence type="ECO:0000305" key="2"/>
<gene>
    <name type="primary">FAD7A-1</name>
</gene>
<reference key="1">
    <citation type="journal article" date="1994" name="Plant Physiol.">
        <title>Plasmid omega-3 fatty acid desaturase cDNA from Ricinus communis.</title>
        <authorList>
            <person name="van de Loo F.J."/>
            <person name="Somerville C.R."/>
        </authorList>
    </citation>
    <scope>NUCLEOTIDE SEQUENCE [MRNA]</scope>
    <source>
        <strain>cv. Baker 296</strain>
        <tissue>Seed</tissue>
    </source>
</reference>
<organism>
    <name type="scientific">Ricinus communis</name>
    <name type="common">Castor bean</name>
    <dbReference type="NCBI Taxonomy" id="3988"/>
    <lineage>
        <taxon>Eukaryota</taxon>
        <taxon>Viridiplantae</taxon>
        <taxon>Streptophyta</taxon>
        <taxon>Embryophyta</taxon>
        <taxon>Tracheophyta</taxon>
        <taxon>Spermatophyta</taxon>
        <taxon>Magnoliopsida</taxon>
        <taxon>eudicotyledons</taxon>
        <taxon>Gunneridae</taxon>
        <taxon>Pentapetalae</taxon>
        <taxon>rosids</taxon>
        <taxon>fabids</taxon>
        <taxon>Malpighiales</taxon>
        <taxon>Euphorbiaceae</taxon>
        <taxon>Acalyphoideae</taxon>
        <taxon>Acalypheae</taxon>
        <taxon>Ricinus</taxon>
    </lineage>
</organism>
<dbReference type="EC" id="1.14.19.-"/>
<dbReference type="EMBL" id="L25897">
    <property type="protein sequence ID" value="AAA73511.1"/>
    <property type="molecule type" value="mRNA"/>
</dbReference>
<dbReference type="PIR" id="T10063">
    <property type="entry name" value="T10063"/>
</dbReference>
<dbReference type="RefSeq" id="NP_001310643.1">
    <property type="nucleotide sequence ID" value="NM_001323714.1"/>
</dbReference>
<dbReference type="SMR" id="P48619"/>
<dbReference type="GeneID" id="8265360"/>
<dbReference type="KEGG" id="rcu:8265360"/>
<dbReference type="eggNOG" id="ENOG502QQQ2">
    <property type="taxonomic scope" value="Eukaryota"/>
</dbReference>
<dbReference type="OMA" id="KNDHYVS"/>
<dbReference type="OrthoDB" id="1461976at2759"/>
<dbReference type="UniPathway" id="UPA00658"/>
<dbReference type="GO" id="GO:0031969">
    <property type="term" value="C:chloroplast membrane"/>
    <property type="evidence" value="ECO:0007669"/>
    <property type="project" value="UniProtKB-SubCell"/>
</dbReference>
<dbReference type="GO" id="GO:0016717">
    <property type="term" value="F:oxidoreductase activity, acting on paired donors, with oxidation of a pair of donors resulting in the reduction of molecular oxygen to two molecules of water"/>
    <property type="evidence" value="ECO:0007669"/>
    <property type="project" value="InterPro"/>
</dbReference>
<dbReference type="GO" id="GO:0006636">
    <property type="term" value="P:unsaturated fatty acid biosynthetic process"/>
    <property type="evidence" value="ECO:0007669"/>
    <property type="project" value="UniProtKB-UniPathway"/>
</dbReference>
<dbReference type="CDD" id="cd03507">
    <property type="entry name" value="Delta12-FADS-like"/>
    <property type="match status" value="1"/>
</dbReference>
<dbReference type="InterPro" id="IPR005804">
    <property type="entry name" value="FA_desaturase_dom"/>
</dbReference>
<dbReference type="InterPro" id="IPR021863">
    <property type="entry name" value="FAS_N"/>
</dbReference>
<dbReference type="InterPro" id="IPR012171">
    <property type="entry name" value="Fatty_acid_desaturase"/>
</dbReference>
<dbReference type="PANTHER" id="PTHR32100">
    <property type="entry name" value="OMEGA-6 FATTY ACID DESATURASE, CHLOROPLASTIC"/>
    <property type="match status" value="1"/>
</dbReference>
<dbReference type="Pfam" id="PF11960">
    <property type="entry name" value="DUF3474"/>
    <property type="match status" value="1"/>
</dbReference>
<dbReference type="Pfam" id="PF00487">
    <property type="entry name" value="FA_desaturase"/>
    <property type="match status" value="1"/>
</dbReference>
<feature type="transit peptide" description="Chloroplast" evidence="1">
    <location>
        <begin position="1"/>
        <end status="unknown"/>
    </location>
</feature>
<feature type="chain" id="PRO_0000007119" description="Omega-3 fatty acid desaturase, chloroplastic">
    <location>
        <begin status="unknown"/>
        <end position="460"/>
    </location>
</feature>
<feature type="short sequence motif" description="Histidine box-1">
    <location>
        <begin position="177"/>
        <end position="181"/>
    </location>
</feature>
<feature type="short sequence motif" description="Histidine box-2">
    <location>
        <begin position="213"/>
        <end position="217"/>
    </location>
</feature>
<feature type="short sequence motif" description="Histidine box-3">
    <location>
        <begin position="380"/>
        <end position="384"/>
    </location>
</feature>
<protein>
    <recommendedName>
        <fullName>Omega-3 fatty acid desaturase, chloroplastic</fullName>
        <ecNumber>1.14.19.-</ecNumber>
    </recommendedName>
</protein>